<organism>
    <name type="scientific">Homo sapiens</name>
    <name type="common">Human</name>
    <dbReference type="NCBI Taxonomy" id="9606"/>
    <lineage>
        <taxon>Eukaryota</taxon>
        <taxon>Metazoa</taxon>
        <taxon>Chordata</taxon>
        <taxon>Craniata</taxon>
        <taxon>Vertebrata</taxon>
        <taxon>Euteleostomi</taxon>
        <taxon>Mammalia</taxon>
        <taxon>Eutheria</taxon>
        <taxon>Euarchontoglires</taxon>
        <taxon>Primates</taxon>
        <taxon>Haplorrhini</taxon>
        <taxon>Catarrhini</taxon>
        <taxon>Hominidae</taxon>
        <taxon>Homo</taxon>
    </lineage>
</organism>
<accession>Q9UBL9</accession>
<accession>A6NGB4</accession>
<accession>A6NH93</accession>
<accession>A6NHC2</accession>
<accession>A6NHU3</accession>
<accession>A6NIG9</accession>
<accession>Q6V9R6</accession>
<accession>Q9NR37</accession>
<accession>Q9NR38</accession>
<accession>Q9UHD5</accession>
<accession>Q9UHD6</accession>
<accession>Q9UHD7</accession>
<accession>Q9Y637</accession>
<accession>Q9Y638</accession>
<comment type="function">
    <text evidence="3 6 7 9">ATP-gated nonselective transmembrane cation channel permeable to potassium, sodium and calcium (PubMed:10570044, PubMed:31636190). Activation by extracellular ATP induces a variety of cellular responses, such as excitatory postsynaptic responses in sensory neurons, neuromuscular junctions (NMJ) formation, hearing, perception of taste and peristalsis (By similarity). In the inner ear, regulates sound transduction and auditory neurotransmission, outer hair cell electromotility, inner ear gap junctions, and K(+) recycling (PubMed:23345450). Mediates synaptic transmission between neurons and from neurons to smooth muscle (By similarity).</text>
</comment>
<comment type="catalytic activity">
    <reaction evidence="6">
        <text>Ca(2+)(in) = Ca(2+)(out)</text>
        <dbReference type="Rhea" id="RHEA:29671"/>
        <dbReference type="ChEBI" id="CHEBI:29108"/>
    </reaction>
</comment>
<comment type="catalytic activity">
    <reaction evidence="1">
        <text>K(+)(in) = K(+)(out)</text>
        <dbReference type="Rhea" id="RHEA:29463"/>
        <dbReference type="ChEBI" id="CHEBI:29103"/>
    </reaction>
</comment>
<comment type="catalytic activity">
    <reaction evidence="1">
        <text>Na(+)(in) = Na(+)(out)</text>
        <dbReference type="Rhea" id="RHEA:34963"/>
        <dbReference type="ChEBI" id="CHEBI:29101"/>
    </reaction>
</comment>
<comment type="activity regulation">
    <text evidence="1 6 9">Fast activation by external ATP (PubMed:10570044, PubMed:31636190). Exhibits slow desensitization during prolonged ATP activation (By similarity). Not sensitive to the ATP agonist:alpha/beta-methylene-ATP (PubMed:10570044).</text>
</comment>
<comment type="subunit">
    <text evidence="1">Homotrimer and heterotrimer; functional P2XRs are organized as homomeric and heteromeric trimers (By similarity). Homotrimer (By similarity). Forms heterotrimer with P2RX1 (By similarity). Forms heterotrimer with P2RX6 (By similarity). Forms heterotrimer with P2RX3 (By similarity).</text>
</comment>
<comment type="subcellular location">
    <subcellularLocation>
        <location evidence="7 9">Cell membrane</location>
        <topology evidence="2">Multi-pass membrane protein</topology>
    </subcellularLocation>
    <text evidence="7">Localizes to the apical membranes of hair cells in the organ of Corti.</text>
</comment>
<comment type="alternative products">
    <event type="alternative splicing"/>
    <isoform>
        <id>Q9UBL9-1</id>
        <name>A</name>
        <sequence type="displayed"/>
    </isoform>
    <isoform>
        <id>Q9UBL9-2</id>
        <name>B</name>
        <sequence type="described" ref="VSP_004499"/>
    </isoform>
    <isoform>
        <id>Q9UBL9-3</id>
        <name>C</name>
        <sequence type="described" ref="VSP_004497"/>
    </isoform>
    <isoform>
        <id>Q9UBL9-4</id>
        <name>D</name>
        <sequence type="described" ref="VSP_004498"/>
    </isoform>
    <isoform>
        <id>Q9UBL9-5</id>
        <name>H</name>
        <sequence type="described" ref="VSP_004495"/>
    </isoform>
    <isoform>
        <id>Q9UBL9-6</id>
        <name>I</name>
        <sequence type="described" ref="VSP_004496"/>
    </isoform>
    <isoform>
        <id>Q9UBL9-7</id>
        <name>K</name>
        <sequence type="described" ref="VSP_004497 VSP_014135 VSP_004499"/>
    </isoform>
</comment>
<comment type="tissue specificity">
    <text evidence="6">Expressed in both the central and peripheral nervous system, as well as in the pituitary gland.</text>
</comment>
<comment type="disease" evidence="7 8 9">
    <disease id="DI-03966">
        <name>Deafness, autosomal dominant, 41</name>
        <acronym>DFNA41</acronym>
        <description>A form of non-syndromic deafness characterized by onset of progressive sensorineural hearing loss usually in the second decade. The hearing loss is severe and ultimately affects all frequencies. Exposure to noise exacerbates the hearing loss, particularly at high frequencies.</description>
        <dbReference type="MIM" id="608224"/>
    </disease>
    <text>The disease is caused by variants affecting the gene represented in this entry.</text>
</comment>
<comment type="similarity">
    <text evidence="14">Belongs to the P2X receptor family.</text>
</comment>
<comment type="online information" name="Wikipedia">
    <link uri="https://en.wikipedia.org/wiki/P2X_receptor"/>
    <text>P2X receptor entry</text>
</comment>
<dbReference type="EMBL" id="AF190822">
    <property type="protein sequence ID" value="AAF19170.1"/>
    <property type="molecule type" value="mRNA"/>
</dbReference>
<dbReference type="EMBL" id="AF190823">
    <property type="protein sequence ID" value="AAF19171.1"/>
    <property type="molecule type" value="mRNA"/>
</dbReference>
<dbReference type="EMBL" id="AF190824">
    <property type="protein sequence ID" value="AAF19172.1"/>
    <property type="molecule type" value="mRNA"/>
</dbReference>
<dbReference type="EMBL" id="AF190825">
    <property type="protein sequence ID" value="AAF19173.1"/>
    <property type="molecule type" value="mRNA"/>
</dbReference>
<dbReference type="EMBL" id="AF190826">
    <property type="protein sequence ID" value="AAF19174.1"/>
    <property type="molecule type" value="Genomic_DNA"/>
</dbReference>
<dbReference type="EMBL" id="AF109387">
    <property type="protein sequence ID" value="AAD42947.1"/>
    <property type="molecule type" value="mRNA"/>
</dbReference>
<dbReference type="EMBL" id="AF109388">
    <property type="protein sequence ID" value="AAD42948.1"/>
    <property type="molecule type" value="mRNA"/>
</dbReference>
<dbReference type="EMBL" id="AF260426">
    <property type="protein sequence ID" value="AAF74201.1"/>
    <property type="molecule type" value="mRNA"/>
</dbReference>
<dbReference type="EMBL" id="AF260427">
    <property type="protein sequence ID" value="AAF74202.1"/>
    <property type="molecule type" value="mRNA"/>
</dbReference>
<dbReference type="EMBL" id="AF260428">
    <property type="protein sequence ID" value="AAF74203.1"/>
    <property type="molecule type" value="mRNA"/>
</dbReference>
<dbReference type="EMBL" id="AF260429">
    <property type="protein sequence ID" value="AAF74204.1"/>
    <property type="molecule type" value="mRNA"/>
</dbReference>
<dbReference type="EMBL" id="AY346374">
    <property type="protein sequence ID" value="AAQ54329.1"/>
    <property type="molecule type" value="mRNA"/>
</dbReference>
<dbReference type="EMBL" id="AC131212">
    <property type="status" value="NOT_ANNOTATED_CDS"/>
    <property type="molecule type" value="Genomic_DNA"/>
</dbReference>
<dbReference type="CCDS" id="CCDS31930.1">
    <molecule id="Q9UBL9-4"/>
</dbReference>
<dbReference type="CCDS" id="CCDS31931.1">
    <molecule id="Q9UBL9-1"/>
</dbReference>
<dbReference type="CCDS" id="CCDS31932.1">
    <molecule id="Q9UBL9-2"/>
</dbReference>
<dbReference type="CCDS" id="CCDS31933.1">
    <molecule id="Q9UBL9-3"/>
</dbReference>
<dbReference type="CCDS" id="CCDS31934.1">
    <molecule id="Q9UBL9-6"/>
</dbReference>
<dbReference type="CCDS" id="CCDS31935.1">
    <molecule id="Q9UBL9-5"/>
</dbReference>
<dbReference type="CCDS" id="CCDS61286.1">
    <molecule id="Q9UBL9-7"/>
</dbReference>
<dbReference type="RefSeq" id="NP_001269093.1">
    <molecule id="Q9UBL9-7"/>
    <property type="nucleotide sequence ID" value="NM_001282164.2"/>
</dbReference>
<dbReference type="RefSeq" id="NP_001269094.1">
    <property type="nucleotide sequence ID" value="NM_001282165.1"/>
</dbReference>
<dbReference type="RefSeq" id="NP_036358.2">
    <molecule id="Q9UBL9-6"/>
    <property type="nucleotide sequence ID" value="NM_012226.4"/>
</dbReference>
<dbReference type="RefSeq" id="NP_057402.1">
    <molecule id="Q9UBL9-3"/>
    <property type="nucleotide sequence ID" value="NM_016318.4"/>
</dbReference>
<dbReference type="RefSeq" id="NP_733782.1">
    <molecule id="Q9UBL9-1"/>
    <property type="nucleotide sequence ID" value="NM_170682.4"/>
</dbReference>
<dbReference type="RefSeq" id="NP_733783.1">
    <molecule id="Q9UBL9-4"/>
    <property type="nucleotide sequence ID" value="NM_170683.4"/>
</dbReference>
<dbReference type="RefSeq" id="NP_777361.1">
    <molecule id="Q9UBL9-5"/>
    <property type="nucleotide sequence ID" value="NM_174872.3"/>
</dbReference>
<dbReference type="RefSeq" id="NP_777362.1">
    <molecule id="Q9UBL9-2"/>
    <property type="nucleotide sequence ID" value="NM_174873.3"/>
</dbReference>
<dbReference type="SMR" id="Q9UBL9"/>
<dbReference type="BioGRID" id="116607">
    <property type="interactions" value="79"/>
</dbReference>
<dbReference type="CORUM" id="Q9UBL9"/>
<dbReference type="FunCoup" id="Q9UBL9">
    <property type="interactions" value="613"/>
</dbReference>
<dbReference type="IntAct" id="Q9UBL9">
    <property type="interactions" value="63"/>
</dbReference>
<dbReference type="STRING" id="9606.ENSP00000343339"/>
<dbReference type="BindingDB" id="Q9UBL9"/>
<dbReference type="ChEMBL" id="CHEMBL2531"/>
<dbReference type="DrugBank" id="DB15097">
    <property type="generic name" value="Gefapixant"/>
</dbReference>
<dbReference type="DrugBank" id="DB01069">
    <property type="generic name" value="Promethazine"/>
</dbReference>
<dbReference type="GuidetoPHARMACOLOGY" id="479"/>
<dbReference type="GlyCosmos" id="Q9UBL9">
    <property type="glycosylation" value="3 sites, No reported glycans"/>
</dbReference>
<dbReference type="GlyGen" id="Q9UBL9">
    <property type="glycosylation" value="4 sites, 1 O-linked glycan (1 site)"/>
</dbReference>
<dbReference type="iPTMnet" id="Q9UBL9"/>
<dbReference type="PhosphoSitePlus" id="Q9UBL9"/>
<dbReference type="BioMuta" id="P2RX2"/>
<dbReference type="DMDM" id="12643353"/>
<dbReference type="MassIVE" id="Q9UBL9"/>
<dbReference type="PaxDb" id="9606-ENSP00000343339"/>
<dbReference type="PeptideAtlas" id="Q9UBL9"/>
<dbReference type="ProteomicsDB" id="83999">
    <molecule id="Q9UBL9-1"/>
</dbReference>
<dbReference type="ProteomicsDB" id="84000">
    <molecule id="Q9UBL9-2"/>
</dbReference>
<dbReference type="ProteomicsDB" id="84001">
    <molecule id="Q9UBL9-3"/>
</dbReference>
<dbReference type="ProteomicsDB" id="84002">
    <molecule id="Q9UBL9-4"/>
</dbReference>
<dbReference type="ProteomicsDB" id="84003">
    <molecule id="Q9UBL9-5"/>
</dbReference>
<dbReference type="ProteomicsDB" id="84004">
    <molecule id="Q9UBL9-6"/>
</dbReference>
<dbReference type="ProteomicsDB" id="84005">
    <molecule id="Q9UBL9-7"/>
</dbReference>
<dbReference type="Antibodypedia" id="2714">
    <property type="antibodies" value="329 antibodies from 32 providers"/>
</dbReference>
<dbReference type="DNASU" id="22953"/>
<dbReference type="Ensembl" id="ENST00000343948.8">
    <molecule id="Q9UBL9-4"/>
    <property type="protein sequence ID" value="ENSP00000343339.4"/>
    <property type="gene ID" value="ENSG00000187848.15"/>
</dbReference>
<dbReference type="Ensembl" id="ENST00000348800.9">
    <molecule id="Q9UBL9-2"/>
    <property type="protein sequence ID" value="ENSP00000345095.5"/>
    <property type="gene ID" value="ENSG00000187848.15"/>
</dbReference>
<dbReference type="Ensembl" id="ENST00000350048.9">
    <molecule id="Q9UBL9-3"/>
    <property type="protein sequence ID" value="ENSP00000343904.5"/>
    <property type="gene ID" value="ENSG00000187848.15"/>
</dbReference>
<dbReference type="Ensembl" id="ENST00000351222.8">
    <molecule id="Q9UBL9-5"/>
    <property type="protein sequence ID" value="ENSP00000344502.4"/>
    <property type="gene ID" value="ENSG00000187848.15"/>
</dbReference>
<dbReference type="Ensembl" id="ENST00000352418.8">
    <molecule id="Q9UBL9-6"/>
    <property type="protein sequence ID" value="ENSP00000341419.4"/>
    <property type="gene ID" value="ENSG00000187848.15"/>
</dbReference>
<dbReference type="Ensembl" id="ENST00000449132.6">
    <molecule id="Q9UBL9-7"/>
    <property type="protein sequence ID" value="ENSP00000405531.2"/>
    <property type="gene ID" value="ENSG00000187848.15"/>
</dbReference>
<dbReference type="Ensembl" id="ENST00000643471.2">
    <molecule id="Q9UBL9-1"/>
    <property type="protein sequence ID" value="ENSP00000494644.1"/>
    <property type="gene ID" value="ENSG00000187848.15"/>
</dbReference>
<dbReference type="GeneID" id="22953"/>
<dbReference type="KEGG" id="hsa:22953"/>
<dbReference type="MANE-Select" id="ENST00000643471.2">
    <property type="protein sequence ID" value="ENSP00000494644.1"/>
    <property type="RefSeq nucleotide sequence ID" value="NM_170682.4"/>
    <property type="RefSeq protein sequence ID" value="NP_733782.1"/>
</dbReference>
<dbReference type="UCSC" id="uc001uki.3">
    <molecule id="Q9UBL9-1"/>
    <property type="organism name" value="human"/>
</dbReference>
<dbReference type="AGR" id="HGNC:15459"/>
<dbReference type="CTD" id="22953"/>
<dbReference type="DisGeNET" id="22953"/>
<dbReference type="GeneCards" id="P2RX2"/>
<dbReference type="HGNC" id="HGNC:15459">
    <property type="gene designation" value="P2RX2"/>
</dbReference>
<dbReference type="HPA" id="ENSG00000187848">
    <property type="expression patterns" value="Tissue enhanced (brain, epididymis, prostate)"/>
</dbReference>
<dbReference type="MalaCards" id="P2RX2"/>
<dbReference type="MIM" id="600844">
    <property type="type" value="gene"/>
</dbReference>
<dbReference type="MIM" id="608224">
    <property type="type" value="phenotype"/>
</dbReference>
<dbReference type="neXtProt" id="NX_Q9UBL9"/>
<dbReference type="OpenTargets" id="ENSG00000187848"/>
<dbReference type="Orphanet" id="90635">
    <property type="disease" value="Rare autosomal dominant non-syndromic sensorineural deafness type DFNA"/>
</dbReference>
<dbReference type="PharmGKB" id="PA32862"/>
<dbReference type="VEuPathDB" id="HostDB:ENSG00000187848"/>
<dbReference type="eggNOG" id="ENOG502QVP9">
    <property type="taxonomic scope" value="Eukaryota"/>
</dbReference>
<dbReference type="GeneTree" id="ENSGT01020000230351"/>
<dbReference type="HOGENOM" id="CLU_034469_4_0_1"/>
<dbReference type="InParanoid" id="Q9UBL9"/>
<dbReference type="OMA" id="YETPKIM"/>
<dbReference type="OrthoDB" id="494673at2759"/>
<dbReference type="PAN-GO" id="Q9UBL9">
    <property type="GO annotations" value="2 GO annotations based on evolutionary models"/>
</dbReference>
<dbReference type="PhylomeDB" id="Q9UBL9"/>
<dbReference type="TreeFam" id="TF328633"/>
<dbReference type="PathwayCommons" id="Q9UBL9"/>
<dbReference type="Reactome" id="R-HSA-139853">
    <property type="pathway name" value="Elevation of cytosolic Ca2+ levels"/>
</dbReference>
<dbReference type="Reactome" id="R-HSA-418346">
    <property type="pathway name" value="Platelet homeostasis"/>
</dbReference>
<dbReference type="SignaLink" id="Q9UBL9"/>
<dbReference type="BioGRID-ORCS" id="22953">
    <property type="hits" value="33 hits in 1148 CRISPR screens"/>
</dbReference>
<dbReference type="GeneWiki" id="P2RX2"/>
<dbReference type="GenomeRNAi" id="22953"/>
<dbReference type="Pharos" id="Q9UBL9">
    <property type="development level" value="Tchem"/>
</dbReference>
<dbReference type="PRO" id="PR:Q9UBL9"/>
<dbReference type="Proteomes" id="UP000005640">
    <property type="component" value="Chromosome 12"/>
</dbReference>
<dbReference type="RNAct" id="Q9UBL9">
    <property type="molecule type" value="protein"/>
</dbReference>
<dbReference type="Bgee" id="ENSG00000187848">
    <property type="expression patterns" value="Expressed in mucosa of stomach and 100 other cell types or tissues"/>
</dbReference>
<dbReference type="ExpressionAtlas" id="Q9UBL9">
    <property type="expression patterns" value="baseline and differential"/>
</dbReference>
<dbReference type="GO" id="GO:0016324">
    <property type="term" value="C:apical plasma membrane"/>
    <property type="evidence" value="ECO:0000314"/>
    <property type="project" value="UniProtKB"/>
</dbReference>
<dbReference type="GO" id="GO:0043025">
    <property type="term" value="C:neuronal cell body"/>
    <property type="evidence" value="ECO:0000250"/>
    <property type="project" value="ARUK-UCL"/>
</dbReference>
<dbReference type="GO" id="GO:0098992">
    <property type="term" value="C:neuronal dense core vesicle"/>
    <property type="evidence" value="ECO:0007669"/>
    <property type="project" value="Ensembl"/>
</dbReference>
<dbReference type="GO" id="GO:0005886">
    <property type="term" value="C:plasma membrane"/>
    <property type="evidence" value="ECO:0000314"/>
    <property type="project" value="UniProtKB"/>
</dbReference>
<dbReference type="GO" id="GO:0098794">
    <property type="term" value="C:postsynapse"/>
    <property type="evidence" value="ECO:0007669"/>
    <property type="project" value="GOC"/>
</dbReference>
<dbReference type="GO" id="GO:0043235">
    <property type="term" value="C:receptor complex"/>
    <property type="evidence" value="ECO:0000314"/>
    <property type="project" value="ARUK-UCL"/>
</dbReference>
<dbReference type="GO" id="GO:0005524">
    <property type="term" value="F:ATP binding"/>
    <property type="evidence" value="ECO:0000303"/>
    <property type="project" value="BHF-UCL"/>
</dbReference>
<dbReference type="GO" id="GO:0004931">
    <property type="term" value="F:extracellularly ATP-gated monoatomic cation channel activity"/>
    <property type="evidence" value="ECO:0000314"/>
    <property type="project" value="UniProtKB"/>
</dbReference>
<dbReference type="GO" id="GO:0042802">
    <property type="term" value="F:identical protein binding"/>
    <property type="evidence" value="ECO:0000353"/>
    <property type="project" value="BHF-UCL"/>
</dbReference>
<dbReference type="GO" id="GO:0015276">
    <property type="term" value="F:ligand-gated monoatomic ion channel activity"/>
    <property type="evidence" value="ECO:0000304"/>
    <property type="project" value="ProtInc"/>
</dbReference>
<dbReference type="GO" id="GO:0001614">
    <property type="term" value="F:purinergic nucleotide receptor activity"/>
    <property type="evidence" value="ECO:0000303"/>
    <property type="project" value="BHF-UCL"/>
</dbReference>
<dbReference type="GO" id="GO:0048266">
    <property type="term" value="P:behavioral response to pain"/>
    <property type="evidence" value="ECO:0007669"/>
    <property type="project" value="Ensembl"/>
</dbReference>
<dbReference type="GO" id="GO:0070588">
    <property type="term" value="P:calcium ion transmembrane transport"/>
    <property type="evidence" value="ECO:0000318"/>
    <property type="project" value="GO_Central"/>
</dbReference>
<dbReference type="GO" id="GO:0003029">
    <property type="term" value="P:detection of hypoxic conditions in blood by carotid body chemoreceptor signaling"/>
    <property type="evidence" value="ECO:0007669"/>
    <property type="project" value="Ensembl"/>
</dbReference>
<dbReference type="GO" id="GO:0007528">
    <property type="term" value="P:neuromuscular junction development"/>
    <property type="evidence" value="ECO:0007669"/>
    <property type="project" value="Ensembl"/>
</dbReference>
<dbReference type="GO" id="GO:0007274">
    <property type="term" value="P:neuromuscular synaptic transmission"/>
    <property type="evidence" value="ECO:0007669"/>
    <property type="project" value="Ensembl"/>
</dbReference>
<dbReference type="GO" id="GO:0030432">
    <property type="term" value="P:peristalsis"/>
    <property type="evidence" value="ECO:0007669"/>
    <property type="project" value="Ensembl"/>
</dbReference>
<dbReference type="GO" id="GO:0010524">
    <property type="term" value="P:positive regulation of calcium ion transport into cytosol"/>
    <property type="evidence" value="ECO:0000303"/>
    <property type="project" value="BHF-UCL"/>
</dbReference>
<dbReference type="GO" id="GO:0050850">
    <property type="term" value="P:positive regulation of calcium-mediated signaling"/>
    <property type="evidence" value="ECO:0000303"/>
    <property type="project" value="BHF-UCL"/>
</dbReference>
<dbReference type="GO" id="GO:0033198">
    <property type="term" value="P:response to ATP"/>
    <property type="evidence" value="ECO:0007669"/>
    <property type="project" value="Ensembl"/>
</dbReference>
<dbReference type="GO" id="GO:0009743">
    <property type="term" value="P:response to carbohydrate"/>
    <property type="evidence" value="ECO:0007669"/>
    <property type="project" value="Ensembl"/>
</dbReference>
<dbReference type="GO" id="GO:0001666">
    <property type="term" value="P:response to hypoxia"/>
    <property type="evidence" value="ECO:0007669"/>
    <property type="project" value="Ensembl"/>
</dbReference>
<dbReference type="GO" id="GO:0002931">
    <property type="term" value="P:response to ischemia"/>
    <property type="evidence" value="ECO:0000250"/>
    <property type="project" value="ARUK-UCL"/>
</dbReference>
<dbReference type="GO" id="GO:0007605">
    <property type="term" value="P:sensory perception of sound"/>
    <property type="evidence" value="ECO:0000315"/>
    <property type="project" value="UniProtKB"/>
</dbReference>
<dbReference type="GO" id="GO:0050909">
    <property type="term" value="P:sensory perception of taste"/>
    <property type="evidence" value="ECO:0007669"/>
    <property type="project" value="Ensembl"/>
</dbReference>
<dbReference type="GO" id="GO:0048741">
    <property type="term" value="P:skeletal muscle fiber development"/>
    <property type="evidence" value="ECO:0007669"/>
    <property type="project" value="Ensembl"/>
</dbReference>
<dbReference type="GO" id="GO:0014832">
    <property type="term" value="P:urinary bladder smooth muscle contraction"/>
    <property type="evidence" value="ECO:0007669"/>
    <property type="project" value="Ensembl"/>
</dbReference>
<dbReference type="FunFam" id="1.10.287.940:FF:000008">
    <property type="entry name" value="P2X purinoceptor"/>
    <property type="match status" value="1"/>
</dbReference>
<dbReference type="FunFam" id="2.60.490.10:FF:000003">
    <property type="entry name" value="P2X purinoceptor"/>
    <property type="match status" value="1"/>
</dbReference>
<dbReference type="Gene3D" id="1.10.287.940">
    <property type="entry name" value="atp-gated p2x4 ion channel"/>
    <property type="match status" value="1"/>
</dbReference>
<dbReference type="Gene3D" id="2.60.490.10">
    <property type="entry name" value="atp-gated p2x4 ion channel domain"/>
    <property type="match status" value="1"/>
</dbReference>
<dbReference type="InterPro" id="IPR003045">
    <property type="entry name" value="P2X2_purnocptor"/>
</dbReference>
<dbReference type="InterPro" id="IPR027309">
    <property type="entry name" value="P2X_extracellular_dom_sf"/>
</dbReference>
<dbReference type="InterPro" id="IPR001429">
    <property type="entry name" value="P2X_purnocptor"/>
</dbReference>
<dbReference type="InterPro" id="IPR053792">
    <property type="entry name" value="P2X_RECEPTOR_CS"/>
</dbReference>
<dbReference type="NCBIfam" id="TIGR00863">
    <property type="entry name" value="P2X"/>
    <property type="match status" value="1"/>
</dbReference>
<dbReference type="PANTHER" id="PTHR10125">
    <property type="entry name" value="P2X PURINOCEPTOR"/>
    <property type="match status" value="1"/>
</dbReference>
<dbReference type="PANTHER" id="PTHR10125:SF4">
    <property type="entry name" value="P2X PURINOCEPTOR 2"/>
    <property type="match status" value="1"/>
</dbReference>
<dbReference type="Pfam" id="PF00864">
    <property type="entry name" value="P2X_receptor"/>
    <property type="match status" value="1"/>
</dbReference>
<dbReference type="PIRSF" id="PIRSF005713">
    <property type="entry name" value="P2X_purinoceptor"/>
    <property type="match status" value="1"/>
</dbReference>
<dbReference type="PRINTS" id="PR01309">
    <property type="entry name" value="P2X2RECEPTOR"/>
</dbReference>
<dbReference type="PRINTS" id="PR01307">
    <property type="entry name" value="P2XRECEPTOR"/>
</dbReference>
<dbReference type="PROSITE" id="PS01212">
    <property type="entry name" value="P2X_RECEPTOR"/>
    <property type="match status" value="1"/>
</dbReference>
<name>P2RX2_HUMAN</name>
<reference key="1">
    <citation type="journal article" date="1999" name="Mol. Pharmacol.">
        <title>Molecular and functional characterization of human P2X(2) receptors.</title>
        <authorList>
            <person name="Lynch K.J."/>
            <person name="Touma E."/>
            <person name="Niforatos W."/>
            <person name="Kage K.L."/>
            <person name="Burgard E.C."/>
            <person name="van Biesen T."/>
            <person name="Kowaluk E.A."/>
            <person name="Jarvis M.F."/>
        </authorList>
    </citation>
    <scope>NUCLEOTIDE SEQUENCE [GENOMIC DNA / MRNA] (ISOFORMS A; B; C AND D)</scope>
    <scope>FUNCTION</scope>
    <scope>TRANSPORTER ACTIVITY</scope>
    <scope>ACTIVITY REGULATION</scope>
    <scope>TISSUE SPECIFICITY</scope>
    <source>
        <tissue>Pituitary</tissue>
    </source>
</reference>
<reference key="2">
    <citation type="submission" date="1998-11" db="EMBL/GenBank/DDBJ databases">
        <title>Cloning of the human P2X2 receptor cDNA and multiple splice variants.</title>
        <authorList>
            <person name="McMahon R.A."/>
            <person name="Egan T.M."/>
            <person name="Hurley P.T."/>
            <person name="Nelson A."/>
            <person name="Rogers M."/>
            <person name="Martin F."/>
        </authorList>
    </citation>
    <scope>NUCLEOTIDE SEQUENCE [MRNA] (ISOFORMS A AND B)</scope>
    <source>
        <tissue>Placenta</tissue>
    </source>
</reference>
<reference key="3">
    <citation type="submission" date="2000-04" db="EMBL/GenBank/DDBJ databases">
        <title>Cloning and molecular characterization of human P2X2 and its splice variants.</title>
        <authorList>
            <person name="Chang T.K."/>
            <person name="Kosaka A.H."/>
            <person name="Oglesby I.B."/>
            <person name="Gever J.R."/>
            <person name="Lachnit W.G."/>
            <person name="Ford A.P.D.W."/>
            <person name="Chang D.J."/>
        </authorList>
    </citation>
    <scope>NUCLEOTIDE SEQUENCE [MRNA] (ISOFORMS A; C; H AND I)</scope>
    <source>
        <tissue>Prostate</tissue>
    </source>
</reference>
<reference key="4">
    <citation type="submission" date="2003-07" db="EMBL/GenBank/DDBJ databases">
        <authorList>
            <person name="Lin L."/>
            <person name="Zheng G."/>
            <person name="Yu R."/>
            <person name="Li H."/>
            <person name="Shen C."/>
            <person name="Zhou G."/>
            <person name="Zhong G."/>
            <person name="Li M."/>
            <person name="Xiao W."/>
            <person name="Ke R."/>
            <person name="Yang S."/>
        </authorList>
    </citation>
    <scope>NUCLEOTIDE SEQUENCE [LARGE SCALE MRNA] (ISOFORM K)</scope>
</reference>
<reference key="5">
    <citation type="journal article" date="2006" name="Nature">
        <title>The finished DNA sequence of human chromosome 12.</title>
        <authorList>
            <person name="Scherer S.E."/>
            <person name="Muzny D.M."/>
            <person name="Buhay C.J."/>
            <person name="Chen R."/>
            <person name="Cree A."/>
            <person name="Ding Y."/>
            <person name="Dugan-Rocha S."/>
            <person name="Gill R."/>
            <person name="Gunaratne P."/>
            <person name="Harris R.A."/>
            <person name="Hawes A.C."/>
            <person name="Hernandez J."/>
            <person name="Hodgson A.V."/>
            <person name="Hume J."/>
            <person name="Jackson A."/>
            <person name="Khan Z.M."/>
            <person name="Kovar-Smith C."/>
            <person name="Lewis L.R."/>
            <person name="Lozado R.J."/>
            <person name="Metzker M.L."/>
            <person name="Milosavljevic A."/>
            <person name="Miner G.R."/>
            <person name="Montgomery K.T."/>
            <person name="Morgan M.B."/>
            <person name="Nazareth L.V."/>
            <person name="Scott G."/>
            <person name="Sodergren E."/>
            <person name="Song X.-Z."/>
            <person name="Steffen D."/>
            <person name="Lovering R.C."/>
            <person name="Wheeler D.A."/>
            <person name="Worley K.C."/>
            <person name="Yuan Y."/>
            <person name="Zhang Z."/>
            <person name="Adams C.Q."/>
            <person name="Ansari-Lari M.A."/>
            <person name="Ayele M."/>
            <person name="Brown M.J."/>
            <person name="Chen G."/>
            <person name="Chen Z."/>
            <person name="Clerc-Blankenburg K.P."/>
            <person name="Davis C."/>
            <person name="Delgado O."/>
            <person name="Dinh H.H."/>
            <person name="Draper H."/>
            <person name="Gonzalez-Garay M.L."/>
            <person name="Havlak P."/>
            <person name="Jackson L.R."/>
            <person name="Jacob L.S."/>
            <person name="Kelly S.H."/>
            <person name="Li L."/>
            <person name="Li Z."/>
            <person name="Liu J."/>
            <person name="Liu W."/>
            <person name="Lu J."/>
            <person name="Maheshwari M."/>
            <person name="Nguyen B.-V."/>
            <person name="Okwuonu G.O."/>
            <person name="Pasternak S."/>
            <person name="Perez L.M."/>
            <person name="Plopper F.J.H."/>
            <person name="Santibanez J."/>
            <person name="Shen H."/>
            <person name="Tabor P.E."/>
            <person name="Verduzco D."/>
            <person name="Waldron L."/>
            <person name="Wang Q."/>
            <person name="Williams G.A."/>
            <person name="Zhang J."/>
            <person name="Zhou J."/>
            <person name="Allen C.C."/>
            <person name="Amin A.G."/>
            <person name="Anyalebechi V."/>
            <person name="Bailey M."/>
            <person name="Barbaria J.A."/>
            <person name="Bimage K.E."/>
            <person name="Bryant N.P."/>
            <person name="Burch P.E."/>
            <person name="Burkett C.E."/>
            <person name="Burrell K.L."/>
            <person name="Calderon E."/>
            <person name="Cardenas V."/>
            <person name="Carter K."/>
            <person name="Casias K."/>
            <person name="Cavazos I."/>
            <person name="Cavazos S.R."/>
            <person name="Ceasar H."/>
            <person name="Chacko J."/>
            <person name="Chan S.N."/>
            <person name="Chavez D."/>
            <person name="Christopoulos C."/>
            <person name="Chu J."/>
            <person name="Cockrell R."/>
            <person name="Cox C.D."/>
            <person name="Dang M."/>
            <person name="Dathorne S.R."/>
            <person name="David R."/>
            <person name="Davis C.M."/>
            <person name="Davy-Carroll L."/>
            <person name="Deshazo D.R."/>
            <person name="Donlin J.E."/>
            <person name="D'Souza L."/>
            <person name="Eaves K.A."/>
            <person name="Egan A."/>
            <person name="Emery-Cohen A.J."/>
            <person name="Escotto M."/>
            <person name="Flagg N."/>
            <person name="Forbes L.D."/>
            <person name="Gabisi A.M."/>
            <person name="Garza M."/>
            <person name="Hamilton C."/>
            <person name="Henderson N."/>
            <person name="Hernandez O."/>
            <person name="Hines S."/>
            <person name="Hogues M.E."/>
            <person name="Huang M."/>
            <person name="Idlebird D.G."/>
            <person name="Johnson R."/>
            <person name="Jolivet A."/>
            <person name="Jones S."/>
            <person name="Kagan R."/>
            <person name="King L.M."/>
            <person name="Leal B."/>
            <person name="Lebow H."/>
            <person name="Lee S."/>
            <person name="LeVan J.M."/>
            <person name="Lewis L.C."/>
            <person name="London P."/>
            <person name="Lorensuhewa L.M."/>
            <person name="Loulseged H."/>
            <person name="Lovett D.A."/>
            <person name="Lucier A."/>
            <person name="Lucier R.L."/>
            <person name="Ma J."/>
            <person name="Madu R.C."/>
            <person name="Mapua P."/>
            <person name="Martindale A.D."/>
            <person name="Martinez E."/>
            <person name="Massey E."/>
            <person name="Mawhiney S."/>
            <person name="Meador M.G."/>
            <person name="Mendez S."/>
            <person name="Mercado C."/>
            <person name="Mercado I.C."/>
            <person name="Merritt C.E."/>
            <person name="Miner Z.L."/>
            <person name="Minja E."/>
            <person name="Mitchell T."/>
            <person name="Mohabbat F."/>
            <person name="Mohabbat K."/>
            <person name="Montgomery B."/>
            <person name="Moore N."/>
            <person name="Morris S."/>
            <person name="Munidasa M."/>
            <person name="Ngo R.N."/>
            <person name="Nguyen N.B."/>
            <person name="Nickerson E."/>
            <person name="Nwaokelemeh O.O."/>
            <person name="Nwokenkwo S."/>
            <person name="Obregon M."/>
            <person name="Oguh M."/>
            <person name="Oragunye N."/>
            <person name="Oviedo R.J."/>
            <person name="Parish B.J."/>
            <person name="Parker D.N."/>
            <person name="Parrish J."/>
            <person name="Parks K.L."/>
            <person name="Paul H.A."/>
            <person name="Payton B.A."/>
            <person name="Perez A."/>
            <person name="Perrin W."/>
            <person name="Pickens A."/>
            <person name="Primus E.L."/>
            <person name="Pu L.-L."/>
            <person name="Puazo M."/>
            <person name="Quiles M.M."/>
            <person name="Quiroz J.B."/>
            <person name="Rabata D."/>
            <person name="Reeves K."/>
            <person name="Ruiz S.J."/>
            <person name="Shao H."/>
            <person name="Sisson I."/>
            <person name="Sonaike T."/>
            <person name="Sorelle R.P."/>
            <person name="Sutton A.E."/>
            <person name="Svatek A.F."/>
            <person name="Svetz L.A."/>
            <person name="Tamerisa K.S."/>
            <person name="Taylor T.R."/>
            <person name="Teague B."/>
            <person name="Thomas N."/>
            <person name="Thorn R.D."/>
            <person name="Trejos Z.Y."/>
            <person name="Trevino B.K."/>
            <person name="Ukegbu O.N."/>
            <person name="Urban J.B."/>
            <person name="Vasquez L.I."/>
            <person name="Vera V.A."/>
            <person name="Villasana D.M."/>
            <person name="Wang L."/>
            <person name="Ward-Moore S."/>
            <person name="Warren J.T."/>
            <person name="Wei X."/>
            <person name="White F."/>
            <person name="Williamson A.L."/>
            <person name="Wleczyk R."/>
            <person name="Wooden H.S."/>
            <person name="Wooden S.H."/>
            <person name="Yen J."/>
            <person name="Yoon L."/>
            <person name="Yoon V."/>
            <person name="Zorrilla S.E."/>
            <person name="Nelson D."/>
            <person name="Kucherlapati R."/>
            <person name="Weinstock G."/>
            <person name="Gibbs R.A."/>
        </authorList>
    </citation>
    <scope>NUCLEOTIDE SEQUENCE [LARGE SCALE GENOMIC DNA]</scope>
</reference>
<reference key="6">
    <citation type="journal article" date="2013" name="Proc. Natl. Acad. Sci. U.S.A.">
        <title>Mutation of the ATP-gated P2X(2) receptor leads to progressive hearing loss and increased susceptibility to noise.</title>
        <authorList>
            <person name="Yan D."/>
            <person name="Zhu Y."/>
            <person name="Walsh T."/>
            <person name="Xie D."/>
            <person name="Yuan H."/>
            <person name="Sirmaci A."/>
            <person name="Fujikawa T."/>
            <person name="Wong A.C."/>
            <person name="Loh T.L."/>
            <person name="Du L."/>
            <person name="Grati M."/>
            <person name="Vlajkovic S.M."/>
            <person name="Blanton S."/>
            <person name="Ryan A.F."/>
            <person name="Chen Z.Y."/>
            <person name="Thorne P.R."/>
            <person name="Kachar B."/>
            <person name="Tekin M."/>
            <person name="Zhao H.B."/>
            <person name="Housley G.D."/>
            <person name="King M.C."/>
            <person name="Liu X.Z."/>
        </authorList>
    </citation>
    <scope>VARIANT DFNA41 LEU-60</scope>
    <scope>CHARACTERIZATION OF VARIANT DFNA41 LEU-60</scope>
    <scope>FUNCTION</scope>
    <scope>SUBCELLULAR LOCATION</scope>
</reference>
<reference key="7">
    <citation type="journal article" date="2014" name="Gene">
        <title>A novel P2RX2 mutation in an Italian family affected by autosomal dominant nonsyndromic hearing loss.</title>
        <authorList>
            <person name="Faletra F."/>
            <person name="Girotto G."/>
            <person name="D'Adamo A.P."/>
            <person name="Vozzi D."/>
            <person name="Morgan A."/>
            <person name="Gasparini P."/>
        </authorList>
    </citation>
    <scope>VARIANT DFNA41 ARG-353</scope>
</reference>
<reference key="8">
    <citation type="journal article" date="2019" name="Proc. Natl. Acad. Sci. U.S.A.">
        <title>Hearing loss mutations alter the functional properties of human P2X2 receptor channels through distinct mechanisms.</title>
        <authorList>
            <person name="George B."/>
            <person name="Swartz K.J."/>
            <person name="Li M."/>
        </authorList>
    </citation>
    <scope>FUNCTION</scope>
    <scope>SUBCELLULAR LOCATION</scope>
    <scope>ACTIVITY REGULATION</scope>
    <scope>CHARACTERIZATION OF VARIANTS DFNA41 ARG-353 AND DFNA41 LEU-60</scope>
    <scope>MUTAGENESIS OF ASP-273</scope>
</reference>
<keyword id="KW-0025">Alternative splicing</keyword>
<keyword id="KW-0067">ATP-binding</keyword>
<keyword id="KW-1003">Cell membrane</keyword>
<keyword id="KW-0209">Deafness</keyword>
<keyword id="KW-0225">Disease variant</keyword>
<keyword id="KW-1015">Disulfide bond</keyword>
<keyword id="KW-0325">Glycoprotein</keyword>
<keyword id="KW-1009">Hearing</keyword>
<keyword id="KW-0407">Ion channel</keyword>
<keyword id="KW-0406">Ion transport</keyword>
<keyword id="KW-1071">Ligand-gated ion channel</keyword>
<keyword id="KW-0472">Membrane</keyword>
<keyword id="KW-1010">Non-syndromic deafness</keyword>
<keyword id="KW-0547">Nucleotide-binding</keyword>
<keyword id="KW-1267">Proteomics identification</keyword>
<keyword id="KW-0675">Receptor</keyword>
<keyword id="KW-1185">Reference proteome</keyword>
<keyword id="KW-0812">Transmembrane</keyword>
<keyword id="KW-1133">Transmembrane helix</keyword>
<keyword id="KW-0813">Transport</keyword>
<gene>
    <name evidence="15" type="primary">P2RX2</name>
    <name type="synonym">P2X2</name>
</gene>
<sequence length="471" mass="51754">MAAAQPKYPAGATARRLARGCWSALWDYETPKVIVVRNRRLGVLYRAVQLLILLYFVWYVFIVQKSYQESETGPESSIITKVKGITTSEHKVWDVEEYVKPPEGGSVFSIITRVEATHSQTQGTCPESIRVHNATCLSDADCVAGELDMLGNGLRTGRCVPYYQGPSKTCEVFGWCPVEDGASVSQFLGTMAPNFTILIKNSIHYPKFHFSKGNIADRTDGYLKRCTFHEASDLYCPIFKLGFIVEKAGESFTELAHKGGVIGVIINWDCDLDLPASECNPKYSFRRLDPKHVPASSGYNFRFAKYYKINGTTTRTLIKAYGIRIDVIVHGQAGKFSLIPTIINLATALTSVGVGSFLCDWILLTFMNKNKVYSHKKFDKVCTPSHPSGSWPVTLARVLGQAPPEPGHRSEDQHPSPPSGQEGQQGAECGPAFPPLRPCPISAPSEQMVDTPASEPAQASTPTDPKGLAQL</sequence>
<protein>
    <recommendedName>
        <fullName>P2X purinoceptor 2</fullName>
        <shortName>P2X2</shortName>
    </recommendedName>
    <alternativeName>
        <fullName>ATP receptor</fullName>
    </alternativeName>
    <alternativeName>
        <fullName>Purinergic receptor</fullName>
    </alternativeName>
</protein>
<feature type="chain" id="PRO_0000161549" description="P2X purinoceptor 2">
    <location>
        <begin position="1"/>
        <end position="471"/>
    </location>
</feature>
<feature type="topological domain" description="Cytoplasmic" evidence="2">
    <location>
        <begin position="1"/>
        <end position="42"/>
    </location>
</feature>
<feature type="transmembrane region" description="Helical; Name=1" evidence="2">
    <location>
        <begin position="43"/>
        <end position="63"/>
    </location>
</feature>
<feature type="topological domain" description="Extracellular" evidence="2">
    <location>
        <begin position="64"/>
        <end position="337"/>
    </location>
</feature>
<feature type="transmembrane region" description="Helical; Name=2" evidence="2">
    <location>
        <begin position="338"/>
        <end position="358"/>
    </location>
</feature>
<feature type="topological domain" description="Cytoplasmic" evidence="2">
    <location>
        <begin position="359"/>
        <end position="471"/>
    </location>
</feature>
<feature type="region of interest" description="Pore-forming motif" evidence="4">
    <location>
        <begin position="320"/>
        <end position="333"/>
    </location>
</feature>
<feature type="region of interest" description="Disordered" evidence="5">
    <location>
        <begin position="400"/>
        <end position="471"/>
    </location>
</feature>
<feature type="binding site" evidence="2">
    <location>
        <position position="81"/>
    </location>
    <ligand>
        <name>ATP</name>
        <dbReference type="ChEBI" id="CHEBI:30616"/>
    </ligand>
</feature>
<feature type="binding site" evidence="2">
    <location>
        <position position="83"/>
    </location>
    <ligand>
        <name>ATP</name>
        <dbReference type="ChEBI" id="CHEBI:30616"/>
    </ligand>
</feature>
<feature type="binding site" evidence="2">
    <location>
        <position position="196"/>
    </location>
    <ligand>
        <name>ATP</name>
        <dbReference type="ChEBI" id="CHEBI:30616"/>
    </ligand>
</feature>
<feature type="binding site" evidence="2">
    <location>
        <position position="296"/>
    </location>
    <ligand>
        <name>ATP</name>
        <dbReference type="ChEBI" id="CHEBI:30616"/>
    </ligand>
</feature>
<feature type="binding site" evidence="2">
    <location>
        <position position="300"/>
    </location>
    <ligand>
        <name>ATP</name>
        <dbReference type="ChEBI" id="CHEBI:30616"/>
    </ligand>
</feature>
<feature type="binding site" evidence="2">
    <location>
        <position position="302"/>
    </location>
    <ligand>
        <name>ATP</name>
        <dbReference type="ChEBI" id="CHEBI:30616"/>
    </ligand>
</feature>
<feature type="binding site" evidence="2">
    <location>
        <position position="319"/>
    </location>
    <ligand>
        <name>ATP</name>
        <dbReference type="ChEBI" id="CHEBI:30616"/>
    </ligand>
</feature>
<feature type="glycosylation site" description="N-linked (GlcNAc...) asparagine" evidence="4">
    <location>
        <position position="133"/>
    </location>
</feature>
<feature type="glycosylation site" description="N-linked (GlcNAc...) asparagine" evidence="4">
    <location>
        <position position="194"/>
    </location>
</feature>
<feature type="glycosylation site" description="N-linked (GlcNAc...) asparagine" evidence="4">
    <location>
        <position position="310"/>
    </location>
</feature>
<feature type="disulfide bond" evidence="1">
    <location>
        <begin position="21"/>
        <end position="439"/>
    </location>
</feature>
<feature type="disulfide bond" evidence="2">
    <location>
        <begin position="125"/>
        <end position="176"/>
    </location>
</feature>
<feature type="disulfide bond" evidence="2">
    <location>
        <begin position="136"/>
        <end position="159"/>
    </location>
</feature>
<feature type="disulfide bond" evidence="2">
    <location>
        <begin position="142"/>
        <end position="170"/>
    </location>
</feature>
<feature type="disulfide bond" evidence="2">
    <location>
        <begin position="226"/>
        <end position="236"/>
    </location>
</feature>
<feature type="disulfide bond" evidence="2">
    <location>
        <begin position="270"/>
        <end position="279"/>
    </location>
</feature>
<feature type="splice variant" id="VSP_004495" description="In isoform H." evidence="12">
    <location>
        <begin position="36"/>
        <end position="127"/>
    </location>
</feature>
<feature type="splice variant" id="VSP_004496" description="In isoform I." evidence="12">
    <original>NRRLGVLYRAVQLLILLYFVWYVFIVQKSYQESETGPESSIITKVKGITTSEHKVWDVEEYVKPPEGGSVFSIITRVEATHSQTQGTCPESIRVHNATCLSDADCVAGELDMLGN</original>
    <variation>IHRAEKLPGERDGPRELHHHQGQGDHHVRAQSVGRGGVREAPR</variation>
    <location>
        <begin position="38"/>
        <end position="152"/>
    </location>
</feature>
<feature type="splice variant" id="VSP_004497" description="In isoform C and isoform K." evidence="10 12 13">
    <location>
        <begin position="104"/>
        <end position="127"/>
    </location>
</feature>
<feature type="splice variant" id="VSP_014135" description="In isoform K." evidence="13">
    <original>LRTGRCVPYYQGPSKTCEVFGWCPVEDGASVSQFLGTMAPNFTILIKNSIHYPKFHFSKGNIADRTDGYLKRCTFHEASDLYCPIFKLGFIVEKAGESFTELAHK</original>
    <variation>ALQDLRGVRLVPGGRWGLCQPISGYDGPKFHHPHQEQHPLPQIPLLQGQHRRPHRRVPEALHVPRGLRPLLPHLQAGLYRGEGWGELHRARTQGR</variation>
    <location>
        <begin position="154"/>
        <end position="258"/>
    </location>
</feature>
<feature type="splice variant" id="VSP_004498" description="In isoform D." evidence="10">
    <original>V</original>
    <variation>VVRNPLWGPSGCGGSTRPLHTGLCWPQ</variation>
    <location>
        <position position="354"/>
    </location>
</feature>
<feature type="splice variant" id="VSP_004499" description="In isoform B and isoform K." evidence="10 11 13">
    <location>
        <begin position="381"/>
        <end position="447"/>
    </location>
</feature>
<feature type="sequence variant" id="VAR_070687" description="In DFNA41; affects channel activation by ATP; dbSNP:rs587777692." evidence="7 9">
    <original>V</original>
    <variation>L</variation>
    <location>
        <position position="60"/>
    </location>
</feature>
<feature type="sequence variant" id="VAR_070688" description="In DFNA41; exhibits alterations in sensitivity to ATP and ion selectivity; dbSNP:rs202138002." evidence="8 9">
    <original>G</original>
    <variation>R</variation>
    <location>
        <position position="353"/>
    </location>
</feature>
<feature type="mutagenesis site" description="Abolishes localization on the cell membrane." evidence="9">
    <original>D</original>
    <variation>Y</variation>
    <location>
        <position position="273"/>
    </location>
</feature>
<feature type="sequence conflict" description="In Ref. 3; AAD42947/AAD42948." evidence="14" ref="3">
    <original>MAAAQPKYPAGATA</original>
    <variation>MV</variation>
    <location>
        <begin position="1"/>
        <end position="14"/>
    </location>
</feature>
<feature type="sequence conflict" description="In Ref. 4; AAQ54329." evidence="14" ref="4">
    <original>V</original>
    <variation>A</variation>
    <location>
        <position position="48"/>
    </location>
</feature>
<evidence type="ECO:0000250" key="1">
    <source>
        <dbReference type="UniProtKB" id="P49653"/>
    </source>
</evidence>
<evidence type="ECO:0000250" key="2">
    <source>
        <dbReference type="UniProtKB" id="P56373"/>
    </source>
</evidence>
<evidence type="ECO:0000250" key="3">
    <source>
        <dbReference type="UniProtKB" id="Q8K3P1"/>
    </source>
</evidence>
<evidence type="ECO:0000255" key="4"/>
<evidence type="ECO:0000256" key="5">
    <source>
        <dbReference type="SAM" id="MobiDB-lite"/>
    </source>
</evidence>
<evidence type="ECO:0000269" key="6">
    <source>
    </source>
</evidence>
<evidence type="ECO:0000269" key="7">
    <source>
    </source>
</evidence>
<evidence type="ECO:0000269" key="8">
    <source>
    </source>
</evidence>
<evidence type="ECO:0000269" key="9">
    <source>
    </source>
</evidence>
<evidence type="ECO:0000303" key="10">
    <source>
    </source>
</evidence>
<evidence type="ECO:0000303" key="11">
    <source ref="2"/>
</evidence>
<evidence type="ECO:0000303" key="12">
    <source ref="3"/>
</evidence>
<evidence type="ECO:0000303" key="13">
    <source ref="4"/>
</evidence>
<evidence type="ECO:0000305" key="14"/>
<evidence type="ECO:0000312" key="15">
    <source>
        <dbReference type="HGNC" id="HGNC:15459"/>
    </source>
</evidence>
<proteinExistence type="evidence at protein level"/>